<organism>
    <name type="scientific">Dehalococcoides mccartyi (strain ATCC BAA-2100 / JCM 16839 / KCTC 5957 / BAV1)</name>
    <dbReference type="NCBI Taxonomy" id="216389"/>
    <lineage>
        <taxon>Bacteria</taxon>
        <taxon>Bacillati</taxon>
        <taxon>Chloroflexota</taxon>
        <taxon>Dehalococcoidia</taxon>
        <taxon>Dehalococcoidales</taxon>
        <taxon>Dehalococcoidaceae</taxon>
        <taxon>Dehalococcoides</taxon>
    </lineage>
</organism>
<gene>
    <name evidence="1" type="primary">tpiA</name>
    <name type="ordered locus">DehaBAV1_0672</name>
</gene>
<sequence>MRQIIIAGNWKMNTTLSEACTLVQSMKCELERIEGIEKIICPPFISLYPIKTMLENSSIKLGAQNLFYQEKGAYTGEISPLMLKELCQYVIIGHSERRAYFGETGQVVNQKIKAALQAGLLPIVCVGEKPEENENGQTRQVLETQLKEALDGLNLSCIIIAYEPIWAIGTGKAATASEANSAIGYIRRVLGDTLGNAAAQTSPILYGGSVNEKNITEILSQTNIDGALVGGASLKAESFVSICRQAAVIQNKH</sequence>
<evidence type="ECO:0000255" key="1">
    <source>
        <dbReference type="HAMAP-Rule" id="MF_00147"/>
    </source>
</evidence>
<name>TPIS_DEHMB</name>
<feature type="chain" id="PRO_1000076642" description="Triosephosphate isomerase">
    <location>
        <begin position="1"/>
        <end position="253"/>
    </location>
</feature>
<feature type="active site" description="Electrophile" evidence="1">
    <location>
        <position position="94"/>
    </location>
</feature>
<feature type="active site" description="Proton acceptor" evidence="1">
    <location>
        <position position="163"/>
    </location>
</feature>
<feature type="binding site" evidence="1">
    <location>
        <begin position="9"/>
        <end position="11"/>
    </location>
    <ligand>
        <name>substrate</name>
    </ligand>
</feature>
<feature type="binding site" evidence="1">
    <location>
        <position position="169"/>
    </location>
    <ligand>
        <name>substrate</name>
    </ligand>
</feature>
<feature type="binding site" evidence="1">
    <location>
        <position position="209"/>
    </location>
    <ligand>
        <name>substrate</name>
    </ligand>
</feature>
<feature type="binding site" evidence="1">
    <location>
        <begin position="230"/>
        <end position="231"/>
    </location>
    <ligand>
        <name>substrate</name>
    </ligand>
</feature>
<dbReference type="EC" id="5.3.1.1" evidence="1"/>
<dbReference type="EMBL" id="CP000688">
    <property type="protein sequence ID" value="ABQ17256.1"/>
    <property type="molecule type" value="Genomic_DNA"/>
</dbReference>
<dbReference type="SMR" id="A5FRB6"/>
<dbReference type="KEGG" id="deb:DehaBAV1_0672"/>
<dbReference type="PATRIC" id="fig|216389.18.peg.721"/>
<dbReference type="HOGENOM" id="CLU_024251_2_3_0"/>
<dbReference type="UniPathway" id="UPA00109">
    <property type="reaction ID" value="UER00189"/>
</dbReference>
<dbReference type="UniPathway" id="UPA00138"/>
<dbReference type="GO" id="GO:0005829">
    <property type="term" value="C:cytosol"/>
    <property type="evidence" value="ECO:0007669"/>
    <property type="project" value="TreeGrafter"/>
</dbReference>
<dbReference type="GO" id="GO:0004807">
    <property type="term" value="F:triose-phosphate isomerase activity"/>
    <property type="evidence" value="ECO:0007669"/>
    <property type="project" value="UniProtKB-UniRule"/>
</dbReference>
<dbReference type="GO" id="GO:0006094">
    <property type="term" value="P:gluconeogenesis"/>
    <property type="evidence" value="ECO:0007669"/>
    <property type="project" value="UniProtKB-UniRule"/>
</dbReference>
<dbReference type="GO" id="GO:0046166">
    <property type="term" value="P:glyceraldehyde-3-phosphate biosynthetic process"/>
    <property type="evidence" value="ECO:0007669"/>
    <property type="project" value="TreeGrafter"/>
</dbReference>
<dbReference type="GO" id="GO:0019563">
    <property type="term" value="P:glycerol catabolic process"/>
    <property type="evidence" value="ECO:0007669"/>
    <property type="project" value="TreeGrafter"/>
</dbReference>
<dbReference type="GO" id="GO:0006096">
    <property type="term" value="P:glycolytic process"/>
    <property type="evidence" value="ECO:0007669"/>
    <property type="project" value="UniProtKB-UniRule"/>
</dbReference>
<dbReference type="CDD" id="cd00311">
    <property type="entry name" value="TIM"/>
    <property type="match status" value="1"/>
</dbReference>
<dbReference type="FunFam" id="3.20.20.70:FF:000016">
    <property type="entry name" value="Triosephosphate isomerase"/>
    <property type="match status" value="1"/>
</dbReference>
<dbReference type="Gene3D" id="3.20.20.70">
    <property type="entry name" value="Aldolase class I"/>
    <property type="match status" value="1"/>
</dbReference>
<dbReference type="HAMAP" id="MF_00147_B">
    <property type="entry name" value="TIM_B"/>
    <property type="match status" value="1"/>
</dbReference>
<dbReference type="InterPro" id="IPR013785">
    <property type="entry name" value="Aldolase_TIM"/>
</dbReference>
<dbReference type="InterPro" id="IPR035990">
    <property type="entry name" value="TIM_sf"/>
</dbReference>
<dbReference type="InterPro" id="IPR022896">
    <property type="entry name" value="TrioseP_Isoase_bac/euk"/>
</dbReference>
<dbReference type="InterPro" id="IPR000652">
    <property type="entry name" value="Triosephosphate_isomerase"/>
</dbReference>
<dbReference type="InterPro" id="IPR020861">
    <property type="entry name" value="Triosephosphate_isomerase_AS"/>
</dbReference>
<dbReference type="NCBIfam" id="TIGR00419">
    <property type="entry name" value="tim"/>
    <property type="match status" value="1"/>
</dbReference>
<dbReference type="PANTHER" id="PTHR21139">
    <property type="entry name" value="TRIOSEPHOSPHATE ISOMERASE"/>
    <property type="match status" value="1"/>
</dbReference>
<dbReference type="PANTHER" id="PTHR21139:SF42">
    <property type="entry name" value="TRIOSEPHOSPHATE ISOMERASE"/>
    <property type="match status" value="1"/>
</dbReference>
<dbReference type="Pfam" id="PF00121">
    <property type="entry name" value="TIM"/>
    <property type="match status" value="1"/>
</dbReference>
<dbReference type="SUPFAM" id="SSF51351">
    <property type="entry name" value="Triosephosphate isomerase (TIM)"/>
    <property type="match status" value="1"/>
</dbReference>
<dbReference type="PROSITE" id="PS00171">
    <property type="entry name" value="TIM_1"/>
    <property type="match status" value="1"/>
</dbReference>
<dbReference type="PROSITE" id="PS51440">
    <property type="entry name" value="TIM_2"/>
    <property type="match status" value="1"/>
</dbReference>
<reference key="1">
    <citation type="submission" date="2007-05" db="EMBL/GenBank/DDBJ databases">
        <title>Complete sequence of Dehalococcoides sp. BAV1.</title>
        <authorList>
            <consortium name="US DOE Joint Genome Institute"/>
            <person name="Copeland A."/>
            <person name="Lucas S."/>
            <person name="Lapidus A."/>
            <person name="Barry K."/>
            <person name="Detter J.C."/>
            <person name="Glavina del Rio T."/>
            <person name="Hammon N."/>
            <person name="Israni S."/>
            <person name="Pitluck S."/>
            <person name="Lowry S."/>
            <person name="Clum A."/>
            <person name="Schmutz J."/>
            <person name="Larimer F."/>
            <person name="Land M."/>
            <person name="Hauser L."/>
            <person name="Kyrpides N."/>
            <person name="Kim E."/>
            <person name="Ritalahti K.M."/>
            <person name="Loeffler F."/>
            <person name="Richardson P."/>
        </authorList>
    </citation>
    <scope>NUCLEOTIDE SEQUENCE [LARGE SCALE GENOMIC DNA]</scope>
    <source>
        <strain>ATCC BAA-2100 / JCM 16839 / KCTC 5957 / BAV1</strain>
    </source>
</reference>
<comment type="function">
    <text evidence="1">Involved in the gluconeogenesis. Catalyzes stereospecifically the conversion of dihydroxyacetone phosphate (DHAP) to D-glyceraldehyde-3-phosphate (G3P).</text>
</comment>
<comment type="catalytic activity">
    <reaction evidence="1">
        <text>D-glyceraldehyde 3-phosphate = dihydroxyacetone phosphate</text>
        <dbReference type="Rhea" id="RHEA:18585"/>
        <dbReference type="ChEBI" id="CHEBI:57642"/>
        <dbReference type="ChEBI" id="CHEBI:59776"/>
        <dbReference type="EC" id="5.3.1.1"/>
    </reaction>
</comment>
<comment type="pathway">
    <text evidence="1">Carbohydrate biosynthesis; gluconeogenesis.</text>
</comment>
<comment type="pathway">
    <text evidence="1">Carbohydrate degradation; glycolysis; D-glyceraldehyde 3-phosphate from glycerone phosphate: step 1/1.</text>
</comment>
<comment type="subunit">
    <text evidence="1">Homodimer.</text>
</comment>
<comment type="subcellular location">
    <subcellularLocation>
        <location evidence="1">Cytoplasm</location>
    </subcellularLocation>
</comment>
<comment type="similarity">
    <text evidence="1">Belongs to the triosephosphate isomerase family.</text>
</comment>
<protein>
    <recommendedName>
        <fullName evidence="1">Triosephosphate isomerase</fullName>
        <shortName evidence="1">TIM</shortName>
        <shortName evidence="1">TPI</shortName>
        <ecNumber evidence="1">5.3.1.1</ecNumber>
    </recommendedName>
    <alternativeName>
        <fullName evidence="1">Triose-phosphate isomerase</fullName>
    </alternativeName>
</protein>
<proteinExistence type="inferred from homology"/>
<keyword id="KW-0963">Cytoplasm</keyword>
<keyword id="KW-0312">Gluconeogenesis</keyword>
<keyword id="KW-0324">Glycolysis</keyword>
<keyword id="KW-0413">Isomerase</keyword>
<accession>A5FRB6</accession>